<feature type="chain" id="PRO_0000079200" description="RNA-directed RNA polymerase L">
    <location>
        <begin position="1"/>
        <end position="2210"/>
    </location>
</feature>
<feature type="domain" description="RdRp catalytic" evidence="1">
    <location>
        <begin position="1172"/>
        <end position="1368"/>
    </location>
</feature>
<feature type="region of interest" description="Endonuclease" evidence="1">
    <location>
        <begin position="26"/>
        <end position="284"/>
    </location>
</feature>
<feature type="active site" evidence="1">
    <location>
        <position position="115"/>
    </location>
</feature>
<feature type="binding site" evidence="1">
    <location>
        <position position="51"/>
    </location>
    <ligand>
        <name>Mn(2+)</name>
        <dbReference type="ChEBI" id="CHEBI:29035"/>
        <label>1</label>
    </ligand>
</feature>
<feature type="binding site" evidence="1">
    <location>
        <position position="89"/>
    </location>
    <ligand>
        <name>Mn(2+)</name>
        <dbReference type="ChEBI" id="CHEBI:29035"/>
        <label>1</label>
    </ligand>
</feature>
<feature type="binding site" evidence="1">
    <location>
        <position position="89"/>
    </location>
    <ligand>
        <name>Mn(2+)</name>
        <dbReference type="ChEBI" id="CHEBI:29035"/>
        <label>2</label>
    </ligand>
</feature>
<feature type="binding site" evidence="1">
    <location>
        <position position="102"/>
    </location>
    <ligand>
        <name>Mn(2+)</name>
        <dbReference type="ChEBI" id="CHEBI:29035"/>
        <label>1</label>
    </ligand>
</feature>
<feature type="binding site" evidence="1">
    <location>
        <position position="1330"/>
    </location>
    <ligand>
        <name>Mg(2+)</name>
        <dbReference type="ChEBI" id="CHEBI:18420"/>
        <note>catalytic; for RdRp activity</note>
    </ligand>
</feature>
<keyword id="KW-1157">Cap snatching</keyword>
<keyword id="KW-1035">Host cytoplasm</keyword>
<keyword id="KW-0378">Hydrolase</keyword>
<keyword id="KW-0460">Magnesium</keyword>
<keyword id="KW-0464">Manganese</keyword>
<keyword id="KW-0479">Metal-binding</keyword>
<keyword id="KW-0547">Nucleotide-binding</keyword>
<keyword id="KW-0548">Nucleotidyltransferase</keyword>
<keyword id="KW-1185">Reference proteome</keyword>
<keyword id="KW-0696">RNA-directed RNA polymerase</keyword>
<keyword id="KW-0808">Transferase</keyword>
<keyword id="KW-0693">Viral RNA replication</keyword>
<keyword id="KW-0946">Virion</keyword>
<organism>
    <name type="scientific">Tacaribe virus (strain Franze-Fernandez)</name>
    <name type="common">TCRV</name>
    <dbReference type="NCBI Taxonomy" id="928313"/>
    <lineage>
        <taxon>Viruses</taxon>
        <taxon>Riboviria</taxon>
        <taxon>Orthornavirae</taxon>
        <taxon>Negarnaviricota</taxon>
        <taxon>Polyploviricotina</taxon>
        <taxon>Ellioviricetes</taxon>
        <taxon>Bunyavirales</taxon>
        <taxon>Arenaviridae</taxon>
        <taxon>Mammarenavirus</taxon>
        <taxon>Tacaribe virus</taxon>
    </lineage>
</organism>
<accession>P20430</accession>
<sequence length="2210" mass="252232">MDETVSELKDLVRKHIPNRHEFAHQKDAFLSHCHSGSLLQEGFKLLSNLVELESCESHACHLNTCQKYVDVILSDHGIPCPTLPKVIPDGFKLTGKTLILLETFVRVNPEEFERKWKSDMTKLLNLKQDLLRSGITLVPVVDGRTNYSNRFTPEWVVERIRWLLIEILRKSRSSAEIDIEDQEYQRLIHSLSNVRNQSLGFENIECLKRNLLEYDDRLAKSLFVGVKGDVRESVIREELMKLRLWYKKEVFDKNLGKFRITNRSELLNNLIRLGKHEDNTTSDCPFCVNKFMDIIYSLTFTALKRQDREKSNSELDQYVVCPHEKAYLGVLSICNKIKGLKVFNTRRNTLLFLDLIMVNFLDDLFTAKPEALDSLRRSGLILGQMVTLVNDRALDFLEAVKLIKKKIETNVKWVENCSKILRRSQQDIWSQISVWARYPDLSKLISIAQTISSDRPIMRYSAGGNFNTECKHKTFHMMSDAEQVEAFKILSSVSLSLINSMKTSFSSRLLINEKEYSRYFGNVRLRECYQQRFFLTDGLIVILFYQKTGERSGCYSIYTCEDGVLVEKGSFYCDPKRFFLPIFSQEVLVEMCDEMTTWLDFNSDLMVISKEKLRLLLLSILCAPSKRNQVFLQGLRYFLMAYSNQFHHVDLLSKLKVECMSGSEVIVQRLAVDLFQCLLGEGVDSDPYFARRFKYLLNVSYLCHLITKETPDRLTDQIKCFEKFIEPKIDFNCVIVNPSLNGQLTEAQEGMMLDGLDKFYSKTLKDCSDTKLPGVSNELLSYCISLFNKGKLKVTGELKNDPFKPNITSTALDLSSNKSVVVPKLDELGNVLSVYDREKMISSCVSSMAERFKTKGRYNIDPSTLDYLILKNLTGLVSIGSKTQRDCEELSMMFEGLTEEQAEAFNDIKNSVQLAMVKMKDSKSGDVNLSPNQKEGRVKSSTGTLEELWGPFGIMREIRTEVSLHEVKDFDPDVLASDLYKELCDVVYYSSSKPEYFLERPLEVCPLGLLLKNLTTSAYFDEEYFECFKYLLIQGHYDQKLGSYEHRSRSRLGFTNEALRVKDEVRLSMRESNSEAIADKLDRSYFTNAALRNLCFYSDDSPTEFTSISSNNGNLKFGLSYKEQVGSNRELYVGDLNTKLITRLVEDFAEAVGSSMRYTCLSSEKEFDRAICDMKLAVNNGDLSCSLDHSKWGPTMSPALFLTFLQFLELRTPKERNIINLEPVLNVLRWHLHKVIEVPVNVAEAYCTGNLKRSLGLMGCGSSSVGEEFFHQFMPVQGEIPSHIMSVLDMGQGILHNMSDLYGLITEQFLNYVLDLLYDVIPTSYTSSDDQVTLIKLPCASDDNQVNDEWLEMLCFHEYLSSKLNKFVSPKSVAGTFVAEFKSRFFVMGEETPLLTQFVAAALHNVKCKTPTQLSETIDTICDQCVANGVSVQIVSKISQRVNQLIKYSGFKETPFGAVEKQDVKDWVDGTRGYRLQRKIESIFSDDEMTGFIRSCAKRVFNDIKRGKVFEENLISLIGRDGDDALVGFLRYSSCSEQDIMRALGFRWVNLSSFGDLRLVLRTKLMTSRRVLEREEVPTLIKTLQSRLSRNFTKGVKKILAESINKSAFQSSVASGFIGFCKSIGSKCVRDGEGGFLYIKDIYTKVKPCLCEVCNMKRGVIYCRPSLEKIEKFSKPILWDYFSLVLTNACEIGEWVFSSVKEPQIPVVLSNRNLFWAVKPRIVRQLEDQLGMNHVLYSIRKNYPKLFDEHLSPFMSDLQVNRTLDGRKLKFLDVCIALDLMNENLGIVSHLLKARDNSVYIVKQSDCAMAHVRQSDYVDKEVGLSPQQVCYNFMVQIILSSMVNPLVMSTSCLKSFFWFNEVLELEDDGQIELGELTDFTFLVRDQKISRAMFIEDIAMGYVISNLEDVRLYIDKITIGEQPLAPGRHINDLLDLLGNFDDHEDCDLRFLIQVEHSRTSTKYRFKRKMTYSFSVTCVSKVIDLKEASVELQVVDVTQSVSGSGGSHLLLDGVSMIAGLPIFTGQGTFNMASLMMDADLVETNDNLILTDVRFSFGGFLSELSDKYAYTLNGPVDQGEPLVLRDGHFFMGTEKVSTYRVELTGDIIVKAIGALDDPEDVNALLNQLWPYLKSTAQVMLFQQEDFVLVYDLHRSGLIRSLELIGDWVEFVNFKVAYSKSLKDLVVSDNQGSLRLRGIMCRPLARRNTVEDIE</sequence>
<organismHost>
    <name type="scientific">Artibeus</name>
    <name type="common">neotropical fruit bats</name>
    <dbReference type="NCBI Taxonomy" id="9416"/>
</organismHost>
<name>L_TACVF</name>
<evidence type="ECO:0000255" key="1">
    <source>
        <dbReference type="HAMAP-Rule" id="MF_04086"/>
    </source>
</evidence>
<dbReference type="EC" id="2.7.7.48" evidence="1"/>
<dbReference type="EC" id="3.1.-.-" evidence="1"/>
<dbReference type="EMBL" id="J04340">
    <property type="protein sequence ID" value="AAA47901.1"/>
    <property type="molecule type" value="Genomic_RNA"/>
</dbReference>
<dbReference type="PIR" id="A31468">
    <property type="entry name" value="RRXPTV"/>
</dbReference>
<dbReference type="SMR" id="P20430"/>
<dbReference type="KEGG" id="vg:956595"/>
<dbReference type="Proteomes" id="UP000008026">
    <property type="component" value="Genome"/>
</dbReference>
<dbReference type="GO" id="GO:0030430">
    <property type="term" value="C:host cell cytoplasm"/>
    <property type="evidence" value="ECO:0007669"/>
    <property type="project" value="UniProtKB-SubCell"/>
</dbReference>
<dbReference type="GO" id="GO:0044423">
    <property type="term" value="C:virion component"/>
    <property type="evidence" value="ECO:0007669"/>
    <property type="project" value="UniProtKB-KW"/>
</dbReference>
<dbReference type="GO" id="GO:0016787">
    <property type="term" value="F:hydrolase activity"/>
    <property type="evidence" value="ECO:0007669"/>
    <property type="project" value="UniProtKB-KW"/>
</dbReference>
<dbReference type="GO" id="GO:0046872">
    <property type="term" value="F:metal ion binding"/>
    <property type="evidence" value="ECO:0007669"/>
    <property type="project" value="UniProtKB-KW"/>
</dbReference>
<dbReference type="GO" id="GO:0000166">
    <property type="term" value="F:nucleotide binding"/>
    <property type="evidence" value="ECO:0007669"/>
    <property type="project" value="UniProtKB-UniRule"/>
</dbReference>
<dbReference type="GO" id="GO:0003968">
    <property type="term" value="F:RNA-directed RNA polymerase activity"/>
    <property type="evidence" value="ECO:0007669"/>
    <property type="project" value="UniProtKB-UniRule"/>
</dbReference>
<dbReference type="GO" id="GO:0075526">
    <property type="term" value="P:cap snatching"/>
    <property type="evidence" value="ECO:0007669"/>
    <property type="project" value="UniProtKB-UniRule"/>
</dbReference>
<dbReference type="GO" id="GO:0039689">
    <property type="term" value="P:negative stranded viral RNA replication"/>
    <property type="evidence" value="ECO:0000250"/>
    <property type="project" value="UniProtKB"/>
</dbReference>
<dbReference type="GO" id="GO:0039696">
    <property type="term" value="P:RNA-templated viral transcription"/>
    <property type="evidence" value="ECO:0000250"/>
    <property type="project" value="UniProtKB"/>
</dbReference>
<dbReference type="FunFam" id="3.30.70.2640:FF:000001">
    <property type="entry name" value="RNA-directed RNA polymerase L"/>
    <property type="match status" value="1"/>
</dbReference>
<dbReference type="Gene3D" id="3.30.70.2640">
    <property type="entry name" value="Arenavirus RNA polymerase"/>
    <property type="match status" value="1"/>
</dbReference>
<dbReference type="Gene3D" id="1.20.1440.300">
    <property type="entry name" value="RNA-directed RNA polymerase L, helical domain"/>
    <property type="match status" value="1"/>
</dbReference>
<dbReference type="HAMAP" id="MF_04086">
    <property type="entry name" value="ARENA_L"/>
    <property type="match status" value="1"/>
</dbReference>
<dbReference type="InterPro" id="IPR026382">
    <property type="entry name" value="CapSnatch_arenavir"/>
</dbReference>
<dbReference type="InterPro" id="IPR048006">
    <property type="entry name" value="CapSnatch_bunyavir"/>
</dbReference>
<dbReference type="InterPro" id="IPR007099">
    <property type="entry name" value="RNA-dir_pol_NSvirus"/>
</dbReference>
<dbReference type="InterPro" id="IPR010453">
    <property type="entry name" value="RNA_pol_arenavir"/>
</dbReference>
<dbReference type="NCBIfam" id="TIGR04202">
    <property type="entry name" value="capSnatchArena"/>
    <property type="match status" value="1"/>
</dbReference>
<dbReference type="Pfam" id="PF06317">
    <property type="entry name" value="Arena_RNA_pol"/>
    <property type="match status" value="1"/>
</dbReference>
<dbReference type="Pfam" id="PF17296">
    <property type="entry name" value="ArenaCapSnatch"/>
    <property type="match status" value="1"/>
</dbReference>
<dbReference type="PIRSF" id="PIRSF000836">
    <property type="entry name" value="L_ArenaV"/>
    <property type="match status" value="1"/>
</dbReference>
<dbReference type="PROSITE" id="PS50525">
    <property type="entry name" value="RDRP_SSRNA_NEG_SEG"/>
    <property type="match status" value="1"/>
</dbReference>
<comment type="function">
    <text evidence="1">RNA-dependent RNA polymerase, which is responsible for the replication and transcription of the viral RNA genome using antigenomic RNA as an intermediate. During transcription, synthesizes subgenomic RNAs and assures their capping by a cap-snatching mechanism, which involves the endonuclease activity cleaving the host capped pre-mRNAs. These short capped RNAs are then used as primers for viral transcription. The 3'-end of subgenomic mRNAs molecules are heterogeneous and not polyadenylated. The replicase function is to direct synthesis of antigenomic and genomic RNA which are encapsidated and non capped. As a consequence of the use of the same enzyme for both transcription and replication, these mechanisms need to be well coordinated. These processes may be regulated by proteins N and Z in a dose-dependent manner. Z protein inhibits the viral polymerase L und thus the viral transcription and RNA synthesis.</text>
</comment>
<comment type="catalytic activity">
    <reaction evidence="1">
        <text>RNA(n) + a ribonucleoside 5'-triphosphate = RNA(n+1) + diphosphate</text>
        <dbReference type="Rhea" id="RHEA:21248"/>
        <dbReference type="Rhea" id="RHEA-COMP:14527"/>
        <dbReference type="Rhea" id="RHEA-COMP:17342"/>
        <dbReference type="ChEBI" id="CHEBI:33019"/>
        <dbReference type="ChEBI" id="CHEBI:61557"/>
        <dbReference type="ChEBI" id="CHEBI:140395"/>
        <dbReference type="EC" id="2.7.7.48"/>
    </reaction>
</comment>
<comment type="cofactor">
    <cofactor evidence="1">
        <name>Mn(2+)</name>
        <dbReference type="ChEBI" id="CHEBI:29035"/>
    </cofactor>
    <text evidence="1">For endonuclease activity. Binds 2 Mn(2+) ions in the active site. The divalent metal ions are crucial for catalytic activity.</text>
</comment>
<comment type="cofactor">
    <cofactor evidence="1">
        <name>Mg(2+)</name>
        <dbReference type="ChEBI" id="CHEBI:18420"/>
    </cofactor>
    <cofactor evidence="1">
        <name>Mn(2+)</name>
        <dbReference type="ChEBI" id="CHEBI:29035"/>
    </cofactor>
    <text evidence="1">For polymerase activity.</text>
</comment>
<comment type="subunit">
    <text evidence="1">Homomultimer; the oligomeric structure is essential for the polymerase activity. Interacts with nucleoprotein N. Interacts with protein Z; this interaction inhibits viral transcription and replication, Z partially blocks the product exit tunnel for the releasing nascent RNA product.</text>
</comment>
<comment type="subcellular location">
    <subcellularLocation>
        <location evidence="1">Virion</location>
    </subcellularLocation>
    <subcellularLocation>
        <location evidence="1">Host cytoplasm</location>
    </subcellularLocation>
</comment>
<comment type="domain">
    <text evidence="1">The N-terminus contains the endonuclease activity (endoN). The central region contains the RdRp activity.</text>
</comment>
<comment type="miscellaneous">
    <text evidence="1">Classified as His(-) endonuclease since it does not have a histidine upstream of the active site that coordinates the first cation. His(-) endonucleases display very low activity in vitro, although they are clearly active in vivo.</text>
</comment>
<comment type="similarity">
    <text evidence="1">Belongs to the Bunyavirales RNA polymerase family.</text>
</comment>
<reference key="1">
    <citation type="journal article" date="1989" name="Virology">
        <title>Tacaribe virus L gene encodes a protein of 2210 amino acid residues.</title>
        <authorList>
            <person name="Iapalucci S."/>
            <person name="Lopez R."/>
            <person name="Rey O."/>
            <person name="Lopez N."/>
            <person name="Franze-Fernandez M.T."/>
            <person name="Cohen G.N."/>
            <person name="Lucero M."/>
            <person name="Ochoa A."/>
            <person name="Zakin M.M."/>
        </authorList>
    </citation>
    <scope>NUCLEOTIDE SEQUENCE [GENOMIC RNA]</scope>
</reference>
<reference key="2">
    <citation type="journal article" date="2003" name="J. Virol.">
        <title>Tacaribe virus Z protein interacts with the L polymerase protein to inhibit viral RNA synthesis.</title>
        <authorList>
            <person name="Jacamo R."/>
            <person name="Lopez N."/>
            <person name="Wilda M."/>
            <person name="Franze-Fernandez M.T."/>
        </authorList>
    </citation>
    <scope>INTERACTION WITH PROTEINS Z AND N</scope>
</reference>
<reference key="3">
    <citation type="journal article" date="2017" name="Crit. Rev. Microbiol.">
        <title>Bunyaviridae RdRps: structure, motifs, and RNA synthesis machinery.</title>
        <authorList>
            <person name="Amroun A."/>
            <person name="Priet S."/>
            <person name="de Lamballerie X."/>
            <person name="Querat G."/>
        </authorList>
    </citation>
    <scope>REVIEW</scope>
</reference>
<reference key="4">
    <citation type="journal article" date="2020" name="Trends Microbiol.">
        <title>The Cap-Snatching Mechanism of Bunyaviruses.</title>
        <authorList>
            <person name="Olschewski S."/>
            <person name="Cusack S."/>
            <person name="Rosenthal M."/>
        </authorList>
    </citation>
    <scope>REVIEW</scope>
</reference>
<gene>
    <name evidence="1" type="primary">L</name>
</gene>
<proteinExistence type="evidence at protein level"/>
<protein>
    <recommendedName>
        <fullName evidence="1">RNA-directed RNA polymerase L</fullName>
        <shortName evidence="1">Protein L</shortName>
        <ecNumber evidence="1">2.7.7.48</ecNumber>
    </recommendedName>
    <alternativeName>
        <fullName evidence="1">Large structural protein</fullName>
    </alternativeName>
    <alternativeName>
        <fullName evidence="1">Replicase</fullName>
    </alternativeName>
    <alternativeName>
        <fullName evidence="1">Transcriptase</fullName>
    </alternativeName>
    <domain>
        <recommendedName>
            <fullName evidence="1">cap-snatching endonuclease</fullName>
            <ecNumber evidence="1">3.1.-.-</ecNumber>
        </recommendedName>
    </domain>
</protein>